<gene>
    <name type="ordered locus">MJ0420</name>
</gene>
<protein>
    <recommendedName>
        <fullName>Uncharacterized protein MJ0420</fullName>
    </recommendedName>
</protein>
<evidence type="ECO:0000255" key="1"/>
<evidence type="ECO:0000305" key="2"/>
<keyword id="KW-1003">Cell membrane</keyword>
<keyword id="KW-0472">Membrane</keyword>
<keyword id="KW-1185">Reference proteome</keyword>
<keyword id="KW-0812">Transmembrane</keyword>
<keyword id="KW-1133">Transmembrane helix</keyword>
<proteinExistence type="predicted"/>
<name>Y420_METJA</name>
<sequence length="380" mass="43660">MHICNIIEKIKKIDLFHPVSIVIIGHLMIFILAFPYLDDIGLYSLFKILGVLSIFIVGFFLPFIFPMQIKFNRHILYLSFLLLSFLSIFGAFKITHSLFLSIAYLLFILIIAELFVKFYKKKIFVDILFSIGIIAFLLIVLIYGAIPLFNYEVRMTINSEPLRLISMGALIYAGIENKVYFIIAFMILVLLGYKAGVLMLFIAYIIYRYRNILFKYMVLLAFALLIFLGIMGKIILLSSNQNWDLNPIELLCYRAYFDLYVLSKIVESNILTLGKITLTPNGEHFIGELLFKYPHNITTTLFGTIYLDFGIFGGLFAMLLGVISKYIYEGDKKLYAIYASLLLAYCEIGINYGFLVVLSLLLYINAKLVFAKLLKLINEL</sequence>
<reference key="1">
    <citation type="journal article" date="1996" name="Science">
        <title>Complete genome sequence of the methanogenic archaeon, Methanococcus jannaschii.</title>
        <authorList>
            <person name="Bult C.J."/>
            <person name="White O."/>
            <person name="Olsen G.J."/>
            <person name="Zhou L."/>
            <person name="Fleischmann R.D."/>
            <person name="Sutton G.G."/>
            <person name="Blake J.A."/>
            <person name="FitzGerald L.M."/>
            <person name="Clayton R.A."/>
            <person name="Gocayne J.D."/>
            <person name="Kerlavage A.R."/>
            <person name="Dougherty B.A."/>
            <person name="Tomb J.-F."/>
            <person name="Adams M.D."/>
            <person name="Reich C.I."/>
            <person name="Overbeek R."/>
            <person name="Kirkness E.F."/>
            <person name="Weinstock K.G."/>
            <person name="Merrick J.M."/>
            <person name="Glodek A."/>
            <person name="Scott J.L."/>
            <person name="Geoghagen N.S.M."/>
            <person name="Weidman J.F."/>
            <person name="Fuhrmann J.L."/>
            <person name="Nguyen D."/>
            <person name="Utterback T.R."/>
            <person name="Kelley J.M."/>
            <person name="Peterson J.D."/>
            <person name="Sadow P.W."/>
            <person name="Hanna M.C."/>
            <person name="Cotton M.D."/>
            <person name="Roberts K.M."/>
            <person name="Hurst M.A."/>
            <person name="Kaine B.P."/>
            <person name="Borodovsky M."/>
            <person name="Klenk H.-P."/>
            <person name="Fraser C.M."/>
            <person name="Smith H.O."/>
            <person name="Woese C.R."/>
            <person name="Venter J.C."/>
        </authorList>
    </citation>
    <scope>NUCLEOTIDE SEQUENCE [LARGE SCALE GENOMIC DNA]</scope>
    <source>
        <strain>ATCC 43067 / DSM 2661 / JAL-1 / JCM 10045 / NBRC 100440</strain>
    </source>
</reference>
<comment type="subcellular location">
    <subcellularLocation>
        <location evidence="2">Cell membrane</location>
        <topology evidence="2">Multi-pass membrane protein</topology>
    </subcellularLocation>
</comment>
<feature type="chain" id="PRO_0000106866" description="Uncharacterized protein MJ0420">
    <location>
        <begin position="1"/>
        <end position="380"/>
    </location>
</feature>
<feature type="transmembrane region" description="Helical" evidence="1">
    <location>
        <begin position="15"/>
        <end position="35"/>
    </location>
</feature>
<feature type="transmembrane region" description="Helical" evidence="1">
    <location>
        <begin position="45"/>
        <end position="65"/>
    </location>
</feature>
<feature type="transmembrane region" description="Helical" evidence="1">
    <location>
        <begin position="75"/>
        <end position="95"/>
    </location>
</feature>
<feature type="transmembrane region" description="Helical" evidence="1">
    <location>
        <begin position="98"/>
        <end position="118"/>
    </location>
</feature>
<feature type="transmembrane region" description="Helical" evidence="1">
    <location>
        <begin position="123"/>
        <end position="143"/>
    </location>
</feature>
<feature type="transmembrane region" description="Helical" evidence="1">
    <location>
        <begin position="182"/>
        <end position="202"/>
    </location>
</feature>
<feature type="transmembrane region" description="Helical" evidence="1">
    <location>
        <begin position="217"/>
        <end position="237"/>
    </location>
</feature>
<feature type="transmembrane region" description="Helical" evidence="1">
    <location>
        <begin position="303"/>
        <end position="323"/>
    </location>
</feature>
<feature type="transmembrane region" description="Helical" evidence="1">
    <location>
        <begin position="341"/>
        <end position="361"/>
    </location>
</feature>
<organism>
    <name type="scientific">Methanocaldococcus jannaschii (strain ATCC 43067 / DSM 2661 / JAL-1 / JCM 10045 / NBRC 100440)</name>
    <name type="common">Methanococcus jannaschii</name>
    <dbReference type="NCBI Taxonomy" id="243232"/>
    <lineage>
        <taxon>Archaea</taxon>
        <taxon>Methanobacteriati</taxon>
        <taxon>Methanobacteriota</taxon>
        <taxon>Methanomada group</taxon>
        <taxon>Methanococci</taxon>
        <taxon>Methanococcales</taxon>
        <taxon>Methanocaldococcaceae</taxon>
        <taxon>Methanocaldococcus</taxon>
    </lineage>
</organism>
<dbReference type="EMBL" id="L77117">
    <property type="protein sequence ID" value="AAB98408.1"/>
    <property type="molecule type" value="Genomic_DNA"/>
</dbReference>
<dbReference type="PIR" id="D64352">
    <property type="entry name" value="D64352"/>
</dbReference>
<dbReference type="RefSeq" id="WP_010869919.1">
    <property type="nucleotide sequence ID" value="NC_000909.1"/>
</dbReference>
<dbReference type="STRING" id="243232.MJ_0420"/>
<dbReference type="PaxDb" id="243232-MJ_0420"/>
<dbReference type="EnsemblBacteria" id="AAB98408">
    <property type="protein sequence ID" value="AAB98408"/>
    <property type="gene ID" value="MJ_0420"/>
</dbReference>
<dbReference type="GeneID" id="1451280"/>
<dbReference type="KEGG" id="mja:MJ_0420"/>
<dbReference type="eggNOG" id="arCOG03207">
    <property type="taxonomic scope" value="Archaea"/>
</dbReference>
<dbReference type="HOGENOM" id="CLU_711001_0_0_2"/>
<dbReference type="InParanoid" id="Q57863"/>
<dbReference type="OrthoDB" id="70767at2157"/>
<dbReference type="PhylomeDB" id="Q57863"/>
<dbReference type="Proteomes" id="UP000000805">
    <property type="component" value="Chromosome"/>
</dbReference>
<dbReference type="GO" id="GO:0005886">
    <property type="term" value="C:plasma membrane"/>
    <property type="evidence" value="ECO:0007669"/>
    <property type="project" value="UniProtKB-SubCell"/>
</dbReference>
<dbReference type="InterPro" id="IPR002760">
    <property type="entry name" value="O_anti_polymase"/>
</dbReference>
<dbReference type="Pfam" id="PF01901">
    <property type="entry name" value="O_anti_polymase"/>
    <property type="match status" value="1"/>
</dbReference>
<accession>Q57863</accession>